<comment type="function">
    <text evidence="1">Part of the Sec protein translocase complex. Interacts with the SecYEG preprotein conducting channel. Has a central role in coupling the hydrolysis of ATP to the transfer of proteins into and across the cell membrane, serving both as a receptor for the preprotein-SecB complex and as an ATP-driven molecular motor driving the stepwise translocation of polypeptide chains across the membrane.</text>
</comment>
<comment type="catalytic activity">
    <reaction evidence="1">
        <text>ATP + H2O + cellular proteinSide 1 = ADP + phosphate + cellular proteinSide 2.</text>
        <dbReference type="EC" id="7.4.2.8"/>
    </reaction>
</comment>
<comment type="cofactor">
    <cofactor evidence="1">
        <name>Zn(2+)</name>
        <dbReference type="ChEBI" id="CHEBI:29105"/>
    </cofactor>
    <text evidence="1">May bind 1 zinc ion per subunit.</text>
</comment>
<comment type="subunit">
    <text evidence="1">Monomer and homodimer. Part of the essential Sec protein translocation apparatus which comprises SecA, SecYEG and auxiliary proteins SecDF-YajC and YidC.</text>
</comment>
<comment type="subcellular location">
    <subcellularLocation>
        <location evidence="1">Cell inner membrane</location>
        <topology evidence="1">Peripheral membrane protein</topology>
        <orientation evidence="1">Cytoplasmic side</orientation>
    </subcellularLocation>
    <subcellularLocation>
        <location evidence="1">Cytoplasm</location>
    </subcellularLocation>
    <text evidence="1">Distribution is 50-50.</text>
</comment>
<comment type="similarity">
    <text evidence="1">Belongs to the SecA family.</text>
</comment>
<keyword id="KW-0067">ATP-binding</keyword>
<keyword id="KW-0997">Cell inner membrane</keyword>
<keyword id="KW-1003">Cell membrane</keyword>
<keyword id="KW-0963">Cytoplasm</keyword>
<keyword id="KW-0472">Membrane</keyword>
<keyword id="KW-0479">Metal-binding</keyword>
<keyword id="KW-0547">Nucleotide-binding</keyword>
<keyword id="KW-0653">Protein transport</keyword>
<keyword id="KW-1185">Reference proteome</keyword>
<keyword id="KW-1278">Translocase</keyword>
<keyword id="KW-0811">Translocation</keyword>
<keyword id="KW-0813">Transport</keyword>
<keyword id="KW-0862">Zinc</keyword>
<feature type="chain" id="PRO_0000321033" description="Protein translocase subunit SecA">
    <location>
        <begin position="1"/>
        <end position="907"/>
    </location>
</feature>
<feature type="region of interest" description="Disordered" evidence="2">
    <location>
        <begin position="834"/>
        <end position="907"/>
    </location>
</feature>
<feature type="compositionally biased region" description="Basic and acidic residues" evidence="2">
    <location>
        <begin position="836"/>
        <end position="853"/>
    </location>
</feature>
<feature type="compositionally biased region" description="Basic and acidic residues" evidence="2">
    <location>
        <begin position="873"/>
        <end position="888"/>
    </location>
</feature>
<feature type="compositionally biased region" description="Basic residues" evidence="2">
    <location>
        <begin position="898"/>
        <end position="907"/>
    </location>
</feature>
<feature type="binding site" evidence="1">
    <location>
        <position position="87"/>
    </location>
    <ligand>
        <name>ATP</name>
        <dbReference type="ChEBI" id="CHEBI:30616"/>
    </ligand>
</feature>
<feature type="binding site" evidence="1">
    <location>
        <begin position="105"/>
        <end position="109"/>
    </location>
    <ligand>
        <name>ATP</name>
        <dbReference type="ChEBI" id="CHEBI:30616"/>
    </ligand>
</feature>
<feature type="binding site" evidence="1">
    <location>
        <position position="512"/>
    </location>
    <ligand>
        <name>ATP</name>
        <dbReference type="ChEBI" id="CHEBI:30616"/>
    </ligand>
</feature>
<feature type="binding site" evidence="1">
    <location>
        <position position="892"/>
    </location>
    <ligand>
        <name>Zn(2+)</name>
        <dbReference type="ChEBI" id="CHEBI:29105"/>
    </ligand>
</feature>
<feature type="binding site" evidence="1">
    <location>
        <position position="894"/>
    </location>
    <ligand>
        <name>Zn(2+)</name>
        <dbReference type="ChEBI" id="CHEBI:29105"/>
    </ligand>
</feature>
<feature type="binding site" evidence="1">
    <location>
        <position position="903"/>
    </location>
    <ligand>
        <name>Zn(2+)</name>
        <dbReference type="ChEBI" id="CHEBI:29105"/>
    </ligand>
</feature>
<feature type="binding site" evidence="1">
    <location>
        <position position="904"/>
    </location>
    <ligand>
        <name>Zn(2+)</name>
        <dbReference type="ChEBI" id="CHEBI:29105"/>
    </ligand>
</feature>
<organism>
    <name type="scientific">Aliivibrio fischeri (strain ATCC 700601 / ES114)</name>
    <name type="common">Vibrio fischeri</name>
    <dbReference type="NCBI Taxonomy" id="312309"/>
    <lineage>
        <taxon>Bacteria</taxon>
        <taxon>Pseudomonadati</taxon>
        <taxon>Pseudomonadota</taxon>
        <taxon>Gammaproteobacteria</taxon>
        <taxon>Vibrionales</taxon>
        <taxon>Vibrionaceae</taxon>
        <taxon>Aliivibrio</taxon>
    </lineage>
</organism>
<name>SECA_ALIF1</name>
<accession>Q5E2Q8</accession>
<proteinExistence type="inferred from homology"/>
<gene>
    <name evidence="1" type="primary">secA</name>
    <name type="ordered locus">VF_2193</name>
</gene>
<dbReference type="EC" id="7.4.2.8" evidence="1"/>
<dbReference type="EMBL" id="CP000020">
    <property type="protein sequence ID" value="AAW86688.1"/>
    <property type="molecule type" value="Genomic_DNA"/>
</dbReference>
<dbReference type="RefSeq" id="WP_011262629.1">
    <property type="nucleotide sequence ID" value="NC_006840.2"/>
</dbReference>
<dbReference type="RefSeq" id="YP_205576.1">
    <property type="nucleotide sequence ID" value="NC_006840.2"/>
</dbReference>
<dbReference type="SMR" id="Q5E2Q8"/>
<dbReference type="STRING" id="312309.VF_2193"/>
<dbReference type="EnsemblBacteria" id="AAW86688">
    <property type="protein sequence ID" value="AAW86688"/>
    <property type="gene ID" value="VF_2193"/>
</dbReference>
<dbReference type="GeneID" id="54164910"/>
<dbReference type="KEGG" id="vfi:VF_2193"/>
<dbReference type="PATRIC" id="fig|312309.11.peg.2233"/>
<dbReference type="eggNOG" id="COG0653">
    <property type="taxonomic scope" value="Bacteria"/>
</dbReference>
<dbReference type="HOGENOM" id="CLU_005314_3_0_6"/>
<dbReference type="OrthoDB" id="9805579at2"/>
<dbReference type="Proteomes" id="UP000000537">
    <property type="component" value="Chromosome I"/>
</dbReference>
<dbReference type="GO" id="GO:0031522">
    <property type="term" value="C:cell envelope Sec protein transport complex"/>
    <property type="evidence" value="ECO:0007669"/>
    <property type="project" value="TreeGrafter"/>
</dbReference>
<dbReference type="GO" id="GO:0005829">
    <property type="term" value="C:cytosol"/>
    <property type="evidence" value="ECO:0007669"/>
    <property type="project" value="TreeGrafter"/>
</dbReference>
<dbReference type="GO" id="GO:0005886">
    <property type="term" value="C:plasma membrane"/>
    <property type="evidence" value="ECO:0007669"/>
    <property type="project" value="UniProtKB-SubCell"/>
</dbReference>
<dbReference type="GO" id="GO:0005524">
    <property type="term" value="F:ATP binding"/>
    <property type="evidence" value="ECO:0007669"/>
    <property type="project" value="UniProtKB-UniRule"/>
</dbReference>
<dbReference type="GO" id="GO:0046872">
    <property type="term" value="F:metal ion binding"/>
    <property type="evidence" value="ECO:0007669"/>
    <property type="project" value="UniProtKB-KW"/>
</dbReference>
<dbReference type="GO" id="GO:0008564">
    <property type="term" value="F:protein-exporting ATPase activity"/>
    <property type="evidence" value="ECO:0007669"/>
    <property type="project" value="UniProtKB-EC"/>
</dbReference>
<dbReference type="GO" id="GO:0065002">
    <property type="term" value="P:intracellular protein transmembrane transport"/>
    <property type="evidence" value="ECO:0007669"/>
    <property type="project" value="UniProtKB-UniRule"/>
</dbReference>
<dbReference type="GO" id="GO:0017038">
    <property type="term" value="P:protein import"/>
    <property type="evidence" value="ECO:0007669"/>
    <property type="project" value="InterPro"/>
</dbReference>
<dbReference type="GO" id="GO:0006605">
    <property type="term" value="P:protein targeting"/>
    <property type="evidence" value="ECO:0007669"/>
    <property type="project" value="UniProtKB-UniRule"/>
</dbReference>
<dbReference type="GO" id="GO:0043952">
    <property type="term" value="P:protein transport by the Sec complex"/>
    <property type="evidence" value="ECO:0007669"/>
    <property type="project" value="TreeGrafter"/>
</dbReference>
<dbReference type="CDD" id="cd17928">
    <property type="entry name" value="DEXDc_SecA"/>
    <property type="match status" value="1"/>
</dbReference>
<dbReference type="CDD" id="cd18803">
    <property type="entry name" value="SF2_C_secA"/>
    <property type="match status" value="1"/>
</dbReference>
<dbReference type="FunFam" id="1.10.3060.10:FF:000001">
    <property type="entry name" value="Preprotein translocase subunit SecA"/>
    <property type="match status" value="1"/>
</dbReference>
<dbReference type="FunFam" id="3.40.50.300:FF:000081">
    <property type="entry name" value="Preprotein translocase subunit SecA"/>
    <property type="match status" value="1"/>
</dbReference>
<dbReference type="FunFam" id="3.40.50.300:FF:000113">
    <property type="entry name" value="Preprotein translocase subunit SecA"/>
    <property type="match status" value="1"/>
</dbReference>
<dbReference type="FunFam" id="3.90.1440.10:FF:000001">
    <property type="entry name" value="Preprotein translocase subunit SecA"/>
    <property type="match status" value="1"/>
</dbReference>
<dbReference type="Gene3D" id="1.10.3060.10">
    <property type="entry name" value="Helical scaffold and wing domains of SecA"/>
    <property type="match status" value="1"/>
</dbReference>
<dbReference type="Gene3D" id="3.40.50.300">
    <property type="entry name" value="P-loop containing nucleotide triphosphate hydrolases"/>
    <property type="match status" value="2"/>
</dbReference>
<dbReference type="Gene3D" id="3.90.1440.10">
    <property type="entry name" value="SecA, preprotein cross-linking domain"/>
    <property type="match status" value="1"/>
</dbReference>
<dbReference type="HAMAP" id="MF_01382">
    <property type="entry name" value="SecA"/>
    <property type="match status" value="1"/>
</dbReference>
<dbReference type="InterPro" id="IPR014001">
    <property type="entry name" value="Helicase_ATP-bd"/>
</dbReference>
<dbReference type="InterPro" id="IPR001650">
    <property type="entry name" value="Helicase_C-like"/>
</dbReference>
<dbReference type="InterPro" id="IPR027417">
    <property type="entry name" value="P-loop_NTPase"/>
</dbReference>
<dbReference type="InterPro" id="IPR004027">
    <property type="entry name" value="SEC_C_motif"/>
</dbReference>
<dbReference type="InterPro" id="IPR000185">
    <property type="entry name" value="SecA"/>
</dbReference>
<dbReference type="InterPro" id="IPR020937">
    <property type="entry name" value="SecA_CS"/>
</dbReference>
<dbReference type="InterPro" id="IPR011115">
    <property type="entry name" value="SecA_DEAD"/>
</dbReference>
<dbReference type="InterPro" id="IPR014018">
    <property type="entry name" value="SecA_motor_DEAD"/>
</dbReference>
<dbReference type="InterPro" id="IPR011130">
    <property type="entry name" value="SecA_preprotein_X-link_dom"/>
</dbReference>
<dbReference type="InterPro" id="IPR044722">
    <property type="entry name" value="SecA_SF2_C"/>
</dbReference>
<dbReference type="InterPro" id="IPR011116">
    <property type="entry name" value="SecA_Wing/Scaffold"/>
</dbReference>
<dbReference type="InterPro" id="IPR036266">
    <property type="entry name" value="SecA_Wing/Scaffold_sf"/>
</dbReference>
<dbReference type="InterPro" id="IPR036670">
    <property type="entry name" value="SecA_X-link_sf"/>
</dbReference>
<dbReference type="NCBIfam" id="NF009538">
    <property type="entry name" value="PRK12904.1"/>
    <property type="match status" value="1"/>
</dbReference>
<dbReference type="NCBIfam" id="TIGR00963">
    <property type="entry name" value="secA"/>
    <property type="match status" value="1"/>
</dbReference>
<dbReference type="PANTHER" id="PTHR30612:SF0">
    <property type="entry name" value="CHLOROPLAST PROTEIN-TRANSPORTING ATPASE"/>
    <property type="match status" value="1"/>
</dbReference>
<dbReference type="PANTHER" id="PTHR30612">
    <property type="entry name" value="SECA INNER MEMBRANE COMPONENT OF SEC PROTEIN SECRETION SYSTEM"/>
    <property type="match status" value="1"/>
</dbReference>
<dbReference type="Pfam" id="PF21090">
    <property type="entry name" value="P-loop_SecA"/>
    <property type="match status" value="1"/>
</dbReference>
<dbReference type="Pfam" id="PF02810">
    <property type="entry name" value="SEC-C"/>
    <property type="match status" value="1"/>
</dbReference>
<dbReference type="Pfam" id="PF07517">
    <property type="entry name" value="SecA_DEAD"/>
    <property type="match status" value="1"/>
</dbReference>
<dbReference type="Pfam" id="PF01043">
    <property type="entry name" value="SecA_PP_bind"/>
    <property type="match status" value="1"/>
</dbReference>
<dbReference type="Pfam" id="PF07516">
    <property type="entry name" value="SecA_SW"/>
    <property type="match status" value="1"/>
</dbReference>
<dbReference type="PRINTS" id="PR00906">
    <property type="entry name" value="SECA"/>
</dbReference>
<dbReference type="SMART" id="SM00957">
    <property type="entry name" value="SecA_DEAD"/>
    <property type="match status" value="1"/>
</dbReference>
<dbReference type="SMART" id="SM00958">
    <property type="entry name" value="SecA_PP_bind"/>
    <property type="match status" value="1"/>
</dbReference>
<dbReference type="SUPFAM" id="SSF81886">
    <property type="entry name" value="Helical scaffold and wing domains of SecA"/>
    <property type="match status" value="1"/>
</dbReference>
<dbReference type="SUPFAM" id="SSF52540">
    <property type="entry name" value="P-loop containing nucleoside triphosphate hydrolases"/>
    <property type="match status" value="2"/>
</dbReference>
<dbReference type="SUPFAM" id="SSF81767">
    <property type="entry name" value="Pre-protein crosslinking domain of SecA"/>
    <property type="match status" value="1"/>
</dbReference>
<dbReference type="PROSITE" id="PS01312">
    <property type="entry name" value="SECA"/>
    <property type="match status" value="1"/>
</dbReference>
<dbReference type="PROSITE" id="PS51196">
    <property type="entry name" value="SECA_MOTOR_DEAD"/>
    <property type="match status" value="1"/>
</dbReference>
<protein>
    <recommendedName>
        <fullName evidence="1">Protein translocase subunit SecA</fullName>
        <ecNumber evidence="1">7.4.2.8</ecNumber>
    </recommendedName>
</protein>
<sequence>MFSKILTKVIGSRNDRTLRKLRKIVDQINKLEPQFESLQDEELKAKTIEFRARLEQGEDLDSLLPEAFATVREASKRLYGMRHFDVQMIGGMVLNDSQIAEMRTGEGKTLTATLPCYLNALTGKGVHVVTVNDYLAKRDAETNRELFEFLGMTVGVNVPNMPPQEKKQAYLCDILYGTNNEFGFDYLRDNMAFRAEDRVQRERYFAVVDEVDSILIDEARTPLIISGPAEDSSELYIRINTLIPQLVKQDEEDSEEYRGEGHYTLDEKGKQTHLTENGQEFVEQLLKDAGLMEEDDTLYSPANISLLHHINAALRAHVLFEKDVDYIVKDDEVIIVDEHTGRTMPGRRWSEGLHQAVEAKEGVKIQNENQTLASITFQNFFRLYDKLSGMTGTADTEAFEFQSIYGLDTVVIPTNRPMARNDMGDLVYMTEAEKFAAIIEDIKGCSERGQPVLVGTVSIEKSELLSNALKKAKIKHNVLNAKFHEQEADIVANAGTASAVTIATNMAGRGTDIVLGGSWQADVAKLSDPTEEQIQAVKAKWKEAHDAVLASGGLHIIGTERHESRRIDNQLRGRAGRQGDAGSSRFYLSMEDALMRIFASDRVSGMMKKLGMEEGEAIEHPWVTKAIENAQRKVEGRNFDIRKQLLEYDDVANDQRKVVYELRDELMNVDDISEMIGYNRQEVLEGLFGQYIPPQSLEEMWDVEGLTIRLRADFDLDLPLQEWLDNDDKLHEDNLREKIIEAAVQVYKEKEESVGESVLRNFEKAVMLQTLDGLWKEHLAAMDHLRQGIHLRGYAQKNPKQEYKRESFELFEGLLDTLKFDVVSILSKVRVQQQEDVERMEEQRRLQAEEAARRQQLQHQNAENQLDDGEGAEEAHSPMVREERKVGRNEPCPCGSGKKYKQCHGKI</sequence>
<evidence type="ECO:0000255" key="1">
    <source>
        <dbReference type="HAMAP-Rule" id="MF_01382"/>
    </source>
</evidence>
<evidence type="ECO:0000256" key="2">
    <source>
        <dbReference type="SAM" id="MobiDB-lite"/>
    </source>
</evidence>
<reference key="1">
    <citation type="journal article" date="2005" name="Proc. Natl. Acad. Sci. U.S.A.">
        <title>Complete genome sequence of Vibrio fischeri: a symbiotic bacterium with pathogenic congeners.</title>
        <authorList>
            <person name="Ruby E.G."/>
            <person name="Urbanowski M."/>
            <person name="Campbell J."/>
            <person name="Dunn A."/>
            <person name="Faini M."/>
            <person name="Gunsalus R."/>
            <person name="Lostroh P."/>
            <person name="Lupp C."/>
            <person name="McCann J."/>
            <person name="Millikan D."/>
            <person name="Schaefer A."/>
            <person name="Stabb E."/>
            <person name="Stevens A."/>
            <person name="Visick K."/>
            <person name="Whistler C."/>
            <person name="Greenberg E.P."/>
        </authorList>
    </citation>
    <scope>NUCLEOTIDE SEQUENCE [LARGE SCALE GENOMIC DNA]</scope>
    <source>
        <strain>ATCC 700601 / ES114</strain>
    </source>
</reference>